<proteinExistence type="inferred from homology"/>
<keyword id="KW-0378">Hydrolase</keyword>
<reference key="1">
    <citation type="journal article" date="2006" name="J. Bacteriol.">
        <title>Complete genome sequence of Yersinia pestis strains Antiqua and Nepal516: evidence of gene reduction in an emerging pathogen.</title>
        <authorList>
            <person name="Chain P.S.G."/>
            <person name="Hu P."/>
            <person name="Malfatti S.A."/>
            <person name="Radnedge L."/>
            <person name="Larimer F."/>
            <person name="Vergez L.M."/>
            <person name="Worsham P."/>
            <person name="Chu M.C."/>
            <person name="Andersen G.L."/>
        </authorList>
    </citation>
    <scope>NUCLEOTIDE SEQUENCE [LARGE SCALE GENOMIC DNA]</scope>
    <source>
        <strain>Antiqua</strain>
    </source>
</reference>
<sequence length="289" mass="32341">MSTYLIGDIHGCLDELLALLAQVNFDPQQDTLWLTGDLVARGPASLDVLRYVRSLGPAVRMVLGNHDLHLLAVYAGISRNKPKDRITPLLDAPDADELINWLRRQPVLQVDDQLKLIMAHAGITPQWDIETAKMCAREVEAVLSSDSYPLFLDAMYGDMPNNWSPELTGLARLRFSTNALTRMRFCFPNGQLDMICKDTPENAPAPLKPWFDLPRLVDPEYSIIFGHWASLEGKGVPEGIYGLDTGCCWGGDLTLLRWDDKRYFTQRAFKAEAEINNNNGFAAGEAVQH</sequence>
<dbReference type="EC" id="3.6.1.41" evidence="1"/>
<dbReference type="EMBL" id="CP000308">
    <property type="protein sequence ID" value="ABG16045.1"/>
    <property type="molecule type" value="Genomic_DNA"/>
</dbReference>
<dbReference type="RefSeq" id="WP_002210492.1">
    <property type="nucleotide sequence ID" value="NZ_CP009906.1"/>
</dbReference>
<dbReference type="SMR" id="Q1C0H7"/>
<dbReference type="GeneID" id="57974120"/>
<dbReference type="KEGG" id="ypa:YPA_4084"/>
<dbReference type="Proteomes" id="UP000001971">
    <property type="component" value="Chromosome"/>
</dbReference>
<dbReference type="GO" id="GO:0008803">
    <property type="term" value="F:bis(5'-nucleosyl)-tetraphosphatase (symmetrical) activity"/>
    <property type="evidence" value="ECO:0007669"/>
    <property type="project" value="UniProtKB-UniRule"/>
</dbReference>
<dbReference type="CDD" id="cd07422">
    <property type="entry name" value="MPP_ApaH"/>
    <property type="match status" value="1"/>
</dbReference>
<dbReference type="FunFam" id="3.60.21.10:FF:000013">
    <property type="entry name" value="Bis(5'-nucleosyl)-tetraphosphatase, symmetrical"/>
    <property type="match status" value="1"/>
</dbReference>
<dbReference type="Gene3D" id="3.60.21.10">
    <property type="match status" value="1"/>
</dbReference>
<dbReference type="HAMAP" id="MF_00199">
    <property type="entry name" value="ApaH"/>
    <property type="match status" value="1"/>
</dbReference>
<dbReference type="InterPro" id="IPR004617">
    <property type="entry name" value="ApaH"/>
</dbReference>
<dbReference type="InterPro" id="IPR004843">
    <property type="entry name" value="Calcineurin-like_PHP_ApaH"/>
</dbReference>
<dbReference type="InterPro" id="IPR029052">
    <property type="entry name" value="Metallo-depent_PP-like"/>
</dbReference>
<dbReference type="NCBIfam" id="TIGR00668">
    <property type="entry name" value="apaH"/>
    <property type="match status" value="1"/>
</dbReference>
<dbReference type="NCBIfam" id="NF001204">
    <property type="entry name" value="PRK00166.1"/>
    <property type="match status" value="1"/>
</dbReference>
<dbReference type="PANTHER" id="PTHR40942">
    <property type="match status" value="1"/>
</dbReference>
<dbReference type="PANTHER" id="PTHR40942:SF4">
    <property type="entry name" value="CYTOCHROME C5"/>
    <property type="match status" value="1"/>
</dbReference>
<dbReference type="Pfam" id="PF00149">
    <property type="entry name" value="Metallophos"/>
    <property type="match status" value="1"/>
</dbReference>
<dbReference type="PIRSF" id="PIRSF000903">
    <property type="entry name" value="B5n-ttraPtase_sm"/>
    <property type="match status" value="1"/>
</dbReference>
<dbReference type="SUPFAM" id="SSF56300">
    <property type="entry name" value="Metallo-dependent phosphatases"/>
    <property type="match status" value="1"/>
</dbReference>
<gene>
    <name evidence="1" type="primary">apaH</name>
    <name type="ordered locus">YPA_4084</name>
</gene>
<name>APAH_YERPA</name>
<feature type="chain" id="PRO_1000012109" description="Bis(5'-nucleosyl)-tetraphosphatase, symmetrical">
    <location>
        <begin position="1"/>
        <end position="289"/>
    </location>
</feature>
<organism>
    <name type="scientific">Yersinia pestis bv. Antiqua (strain Antiqua)</name>
    <dbReference type="NCBI Taxonomy" id="360102"/>
    <lineage>
        <taxon>Bacteria</taxon>
        <taxon>Pseudomonadati</taxon>
        <taxon>Pseudomonadota</taxon>
        <taxon>Gammaproteobacteria</taxon>
        <taxon>Enterobacterales</taxon>
        <taxon>Yersiniaceae</taxon>
        <taxon>Yersinia</taxon>
    </lineage>
</organism>
<accession>Q1C0H7</accession>
<evidence type="ECO:0000255" key="1">
    <source>
        <dbReference type="HAMAP-Rule" id="MF_00199"/>
    </source>
</evidence>
<comment type="function">
    <text evidence="1">Hydrolyzes diadenosine 5',5'''-P1,P4-tetraphosphate to yield ADP.</text>
</comment>
<comment type="catalytic activity">
    <reaction evidence="1">
        <text>P(1),P(4)-bis(5'-adenosyl) tetraphosphate + H2O = 2 ADP + 2 H(+)</text>
        <dbReference type="Rhea" id="RHEA:24252"/>
        <dbReference type="ChEBI" id="CHEBI:15377"/>
        <dbReference type="ChEBI" id="CHEBI:15378"/>
        <dbReference type="ChEBI" id="CHEBI:58141"/>
        <dbReference type="ChEBI" id="CHEBI:456216"/>
        <dbReference type="EC" id="3.6.1.41"/>
    </reaction>
</comment>
<comment type="similarity">
    <text evidence="1">Belongs to the Ap4A hydrolase family.</text>
</comment>
<protein>
    <recommendedName>
        <fullName evidence="1">Bis(5'-nucleosyl)-tetraphosphatase, symmetrical</fullName>
        <ecNumber evidence="1">3.6.1.41</ecNumber>
    </recommendedName>
    <alternativeName>
        <fullName evidence="1">Ap4A hydrolase</fullName>
    </alternativeName>
    <alternativeName>
        <fullName evidence="1">Diadenosine 5',5'''-P1,P4-tetraphosphate pyrophosphohydrolase</fullName>
    </alternativeName>
    <alternativeName>
        <fullName evidence="1">Diadenosine tetraphosphatase</fullName>
    </alternativeName>
</protein>